<gene>
    <name type="primary">queD</name>
    <name type="ordered locus">MJ1272</name>
</gene>
<organism>
    <name type="scientific">Methanocaldococcus jannaschii (strain ATCC 43067 / DSM 2661 / JAL-1 / JCM 10045 / NBRC 100440)</name>
    <name type="common">Methanococcus jannaschii</name>
    <dbReference type="NCBI Taxonomy" id="243232"/>
    <lineage>
        <taxon>Archaea</taxon>
        <taxon>Methanobacteriati</taxon>
        <taxon>Methanobacteriota</taxon>
        <taxon>Methanomada group</taxon>
        <taxon>Methanococci</taxon>
        <taxon>Methanococcales</taxon>
        <taxon>Methanocaldococcaceae</taxon>
        <taxon>Methanocaldococcus</taxon>
    </lineage>
</organism>
<accession>Q58668</accession>
<comment type="function">
    <text evidence="1">Catalyzes the conversion of 7,8-dihydroneopterin triphosphate (H2NTP) to 6-carboxy-5,6,7,8-tetrahydropterin (CPH4) and acetaldehyde.</text>
</comment>
<comment type="catalytic activity">
    <reaction>
        <text>7,8-dihydroneopterin 3'-triphosphate + H2O = 6-carboxy-5,6,7,8-tetrahydropterin + triphosphate + acetaldehyde + 2 H(+)</text>
        <dbReference type="Rhea" id="RHEA:27966"/>
        <dbReference type="ChEBI" id="CHEBI:15343"/>
        <dbReference type="ChEBI" id="CHEBI:15377"/>
        <dbReference type="ChEBI" id="CHEBI:15378"/>
        <dbReference type="ChEBI" id="CHEBI:18036"/>
        <dbReference type="ChEBI" id="CHEBI:58462"/>
        <dbReference type="ChEBI" id="CHEBI:61032"/>
        <dbReference type="EC" id="4.1.2.50"/>
    </reaction>
</comment>
<comment type="cofactor">
    <cofactor evidence="1">
        <name>Zn(2+)</name>
        <dbReference type="ChEBI" id="CHEBI:29105"/>
    </cofactor>
    <text evidence="1">Binds 1 zinc ion per subunit.</text>
</comment>
<comment type="pathway">
    <text>Purine metabolism; 7-cyano-7-deazaguanine biosynthesis.</text>
</comment>
<comment type="miscellaneous">
    <text evidence="1">The active site is at the interface between 2 subunits. The proton acceptor Cys is on one subunit, and the charge relay system is on the other subunit (By similarity).</text>
</comment>
<comment type="similarity">
    <text evidence="2">Belongs to the PTPS family. QueD subfamily.</text>
</comment>
<proteinExistence type="inferred from homology"/>
<reference key="1">
    <citation type="journal article" date="1996" name="Science">
        <title>Complete genome sequence of the methanogenic archaeon, Methanococcus jannaschii.</title>
        <authorList>
            <person name="Bult C.J."/>
            <person name="White O."/>
            <person name="Olsen G.J."/>
            <person name="Zhou L."/>
            <person name="Fleischmann R.D."/>
            <person name="Sutton G.G."/>
            <person name="Blake J.A."/>
            <person name="FitzGerald L.M."/>
            <person name="Clayton R.A."/>
            <person name="Gocayne J.D."/>
            <person name="Kerlavage A.R."/>
            <person name="Dougherty B.A."/>
            <person name="Tomb J.-F."/>
            <person name="Adams M.D."/>
            <person name="Reich C.I."/>
            <person name="Overbeek R."/>
            <person name="Kirkness E.F."/>
            <person name="Weinstock K.G."/>
            <person name="Merrick J.M."/>
            <person name="Glodek A."/>
            <person name="Scott J.L."/>
            <person name="Geoghagen N.S.M."/>
            <person name="Weidman J.F."/>
            <person name="Fuhrmann J.L."/>
            <person name="Nguyen D."/>
            <person name="Utterback T.R."/>
            <person name="Kelley J.M."/>
            <person name="Peterson J.D."/>
            <person name="Sadow P.W."/>
            <person name="Hanna M.C."/>
            <person name="Cotton M.D."/>
            <person name="Roberts K.M."/>
            <person name="Hurst M.A."/>
            <person name="Kaine B.P."/>
            <person name="Borodovsky M."/>
            <person name="Klenk H.-P."/>
            <person name="Fraser C.M."/>
            <person name="Smith H.O."/>
            <person name="Woese C.R."/>
            <person name="Venter J.C."/>
        </authorList>
    </citation>
    <scope>NUCLEOTIDE SEQUENCE [LARGE SCALE GENOMIC DNA]</scope>
    <source>
        <strain>ATCC 43067 / DSM 2661 / JAL-1 / JCM 10045 / NBRC 100440</strain>
    </source>
</reference>
<dbReference type="EC" id="4.1.2.50"/>
<dbReference type="EMBL" id="L77117">
    <property type="protein sequence ID" value="AAB99278.1"/>
    <property type="molecule type" value="Genomic_DNA"/>
</dbReference>
<dbReference type="PIR" id="G64458">
    <property type="entry name" value="G64458"/>
</dbReference>
<dbReference type="RefSeq" id="WP_010870785.1">
    <property type="nucleotide sequence ID" value="NC_000909.1"/>
</dbReference>
<dbReference type="SMR" id="Q58668"/>
<dbReference type="FunCoup" id="Q58668">
    <property type="interactions" value="111"/>
</dbReference>
<dbReference type="STRING" id="243232.MJ_1272"/>
<dbReference type="PaxDb" id="243232-MJ_1272"/>
<dbReference type="EnsemblBacteria" id="AAB99278">
    <property type="protein sequence ID" value="AAB99278"/>
    <property type="gene ID" value="MJ_1272"/>
</dbReference>
<dbReference type="GeneID" id="1452170"/>
<dbReference type="KEGG" id="mja:MJ_1272"/>
<dbReference type="eggNOG" id="arCOG02172">
    <property type="taxonomic scope" value="Archaea"/>
</dbReference>
<dbReference type="HOGENOM" id="CLU_111016_3_0_2"/>
<dbReference type="InParanoid" id="Q58668"/>
<dbReference type="OrthoDB" id="6529at2157"/>
<dbReference type="PhylomeDB" id="Q58668"/>
<dbReference type="UniPathway" id="UPA00391"/>
<dbReference type="Proteomes" id="UP000000805">
    <property type="component" value="Chromosome"/>
</dbReference>
<dbReference type="GO" id="GO:0070497">
    <property type="term" value="F:6-carboxytetrahydropterin synthase activity"/>
    <property type="evidence" value="ECO:0007669"/>
    <property type="project" value="UniProtKB-EC"/>
</dbReference>
<dbReference type="GO" id="GO:0046872">
    <property type="term" value="F:metal ion binding"/>
    <property type="evidence" value="ECO:0007669"/>
    <property type="project" value="UniProtKB-KW"/>
</dbReference>
<dbReference type="Gene3D" id="3.30.479.10">
    <property type="entry name" value="6-pyruvoyl tetrahydropterin synthase/QueD"/>
    <property type="match status" value="1"/>
</dbReference>
<dbReference type="InterPro" id="IPR007115">
    <property type="entry name" value="6-PTP_synth/QueD"/>
</dbReference>
<dbReference type="InterPro" id="IPR038418">
    <property type="entry name" value="6-PTP_synth/QueD_sf"/>
</dbReference>
<dbReference type="PANTHER" id="PTHR12589:SF7">
    <property type="entry name" value="6-PYRUVOYL TETRAHYDROBIOPTERIN SYNTHASE"/>
    <property type="match status" value="1"/>
</dbReference>
<dbReference type="PANTHER" id="PTHR12589">
    <property type="entry name" value="PYRUVOYL TETRAHYDROBIOPTERIN SYNTHASE"/>
    <property type="match status" value="1"/>
</dbReference>
<dbReference type="Pfam" id="PF01242">
    <property type="entry name" value="PTPS"/>
    <property type="match status" value="1"/>
</dbReference>
<dbReference type="SUPFAM" id="SSF55620">
    <property type="entry name" value="Tetrahydrobiopterin biosynthesis enzymes-like"/>
    <property type="match status" value="1"/>
</dbReference>
<name>QUED_METJA</name>
<feature type="chain" id="PRO_0000057931" description="Putative 6-carboxy-5,6,7,8-tetrahydropterin synthase">
    <location>
        <begin position="1"/>
        <end position="163"/>
    </location>
</feature>
<feature type="active site" description="Proton acceptor" evidence="1">
    <location>
        <position position="26"/>
    </location>
</feature>
<feature type="active site" description="Charge relay system" evidence="1">
    <location>
        <position position="70"/>
    </location>
</feature>
<feature type="active site" description="Charge relay system" evidence="1">
    <location>
        <position position="148"/>
    </location>
</feature>
<feature type="binding site" evidence="1">
    <location>
        <position position="18"/>
    </location>
    <ligand>
        <name>Zn(2+)</name>
        <dbReference type="ChEBI" id="CHEBI:29105"/>
    </ligand>
</feature>
<feature type="binding site" evidence="1">
    <location>
        <position position="30"/>
    </location>
    <ligand>
        <name>Zn(2+)</name>
        <dbReference type="ChEBI" id="CHEBI:29105"/>
    </ligand>
</feature>
<feature type="binding site" evidence="1">
    <location>
        <position position="32"/>
    </location>
    <ligand>
        <name>Zn(2+)</name>
        <dbReference type="ChEBI" id="CHEBI:29105"/>
    </ligand>
</feature>
<protein>
    <recommendedName>
        <fullName>Putative 6-carboxy-5,6,7,8-tetrahydropterin synthase</fullName>
        <shortName>CPH4 synthase</shortName>
        <ecNumber>4.1.2.50</ecNumber>
    </recommendedName>
    <alternativeName>
        <fullName>Archaeosine biosynthesis protein QueD</fullName>
    </alternativeName>
</protein>
<keyword id="KW-0456">Lyase</keyword>
<keyword id="KW-0479">Metal-binding</keyword>
<keyword id="KW-1185">Reference proteome</keyword>
<keyword id="KW-0862">Zinc</keyword>
<sequence length="163" mass="18816">MMLELNGLHAGLRFSSAHIVFGHPTCGVIHGHSYYVDVKLYGERAGDFKFVCDFKIIKKIVKEICDELDHKLILPKNHEHVYYELRDKTLYFKYENKEYSIPVEDVILLPIPSTTAEDLAIYFANEIADRLKNLGFSNINWIEVSINEGIGQGACYRKYLEVK</sequence>
<evidence type="ECO:0000250" key="1"/>
<evidence type="ECO:0000305" key="2"/>